<reference key="1">
    <citation type="journal article" date="2002" name="Nature">
        <title>The genome sequence of Schizosaccharomyces pombe.</title>
        <authorList>
            <person name="Wood V."/>
            <person name="Gwilliam R."/>
            <person name="Rajandream M.A."/>
            <person name="Lyne M.H."/>
            <person name="Lyne R."/>
            <person name="Stewart A."/>
            <person name="Sgouros J.G."/>
            <person name="Peat N."/>
            <person name="Hayles J."/>
            <person name="Baker S.G."/>
            <person name="Basham D."/>
            <person name="Bowman S."/>
            <person name="Brooks K."/>
            <person name="Brown D."/>
            <person name="Brown S."/>
            <person name="Chillingworth T."/>
            <person name="Churcher C.M."/>
            <person name="Collins M."/>
            <person name="Connor R."/>
            <person name="Cronin A."/>
            <person name="Davis P."/>
            <person name="Feltwell T."/>
            <person name="Fraser A."/>
            <person name="Gentles S."/>
            <person name="Goble A."/>
            <person name="Hamlin N."/>
            <person name="Harris D.E."/>
            <person name="Hidalgo J."/>
            <person name="Hodgson G."/>
            <person name="Holroyd S."/>
            <person name="Hornsby T."/>
            <person name="Howarth S."/>
            <person name="Huckle E.J."/>
            <person name="Hunt S."/>
            <person name="Jagels K."/>
            <person name="James K.D."/>
            <person name="Jones L."/>
            <person name="Jones M."/>
            <person name="Leather S."/>
            <person name="McDonald S."/>
            <person name="McLean J."/>
            <person name="Mooney P."/>
            <person name="Moule S."/>
            <person name="Mungall K.L."/>
            <person name="Murphy L.D."/>
            <person name="Niblett D."/>
            <person name="Odell C."/>
            <person name="Oliver K."/>
            <person name="O'Neil S."/>
            <person name="Pearson D."/>
            <person name="Quail M.A."/>
            <person name="Rabbinowitsch E."/>
            <person name="Rutherford K.M."/>
            <person name="Rutter S."/>
            <person name="Saunders D."/>
            <person name="Seeger K."/>
            <person name="Sharp S."/>
            <person name="Skelton J."/>
            <person name="Simmonds M.N."/>
            <person name="Squares R."/>
            <person name="Squares S."/>
            <person name="Stevens K."/>
            <person name="Taylor K."/>
            <person name="Taylor R.G."/>
            <person name="Tivey A."/>
            <person name="Walsh S.V."/>
            <person name="Warren T."/>
            <person name="Whitehead S."/>
            <person name="Woodward J.R."/>
            <person name="Volckaert G."/>
            <person name="Aert R."/>
            <person name="Robben J."/>
            <person name="Grymonprez B."/>
            <person name="Weltjens I."/>
            <person name="Vanstreels E."/>
            <person name="Rieger M."/>
            <person name="Schaefer M."/>
            <person name="Mueller-Auer S."/>
            <person name="Gabel C."/>
            <person name="Fuchs M."/>
            <person name="Duesterhoeft A."/>
            <person name="Fritzc C."/>
            <person name="Holzer E."/>
            <person name="Moestl D."/>
            <person name="Hilbert H."/>
            <person name="Borzym K."/>
            <person name="Langer I."/>
            <person name="Beck A."/>
            <person name="Lehrach H."/>
            <person name="Reinhardt R."/>
            <person name="Pohl T.M."/>
            <person name="Eger P."/>
            <person name="Zimmermann W."/>
            <person name="Wedler H."/>
            <person name="Wambutt R."/>
            <person name="Purnelle B."/>
            <person name="Goffeau A."/>
            <person name="Cadieu E."/>
            <person name="Dreano S."/>
            <person name="Gloux S."/>
            <person name="Lelaure V."/>
            <person name="Mottier S."/>
            <person name="Galibert F."/>
            <person name="Aves S.J."/>
            <person name="Xiang Z."/>
            <person name="Hunt C."/>
            <person name="Moore K."/>
            <person name="Hurst S.M."/>
            <person name="Lucas M."/>
            <person name="Rochet M."/>
            <person name="Gaillardin C."/>
            <person name="Tallada V.A."/>
            <person name="Garzon A."/>
            <person name="Thode G."/>
            <person name="Daga R.R."/>
            <person name="Cruzado L."/>
            <person name="Jimenez J."/>
            <person name="Sanchez M."/>
            <person name="del Rey F."/>
            <person name="Benito J."/>
            <person name="Dominguez A."/>
            <person name="Revuelta J.L."/>
            <person name="Moreno S."/>
            <person name="Armstrong J."/>
            <person name="Forsburg S.L."/>
            <person name="Cerutti L."/>
            <person name="Lowe T."/>
            <person name="McCombie W.R."/>
            <person name="Paulsen I."/>
            <person name="Potashkin J."/>
            <person name="Shpakovski G.V."/>
            <person name="Ussery D."/>
            <person name="Barrell B.G."/>
            <person name="Nurse P."/>
        </authorList>
    </citation>
    <scope>NUCLEOTIDE SEQUENCE [LARGE SCALE GENOMIC DNA]</scope>
    <source>
        <strain>972 / ATCC 24843</strain>
    </source>
</reference>
<reference key="2">
    <citation type="journal article" date="2005" name="Curr. Biol.">
        <title>A large-scale screen in S. pombe identifies seven novel genes required for critical meiotic events.</title>
        <authorList>
            <person name="Martin-Castellanos C."/>
            <person name="Blanco M."/>
            <person name="Rozalen A.E."/>
            <person name="Perez-Hidalgo L."/>
            <person name="Garcia A.I."/>
            <person name="Conde F."/>
            <person name="Mata J."/>
            <person name="Ellermeier C."/>
            <person name="Davis L."/>
            <person name="San-Segundo P."/>
            <person name="Smith G.R."/>
            <person name="Moreno S."/>
        </authorList>
    </citation>
    <scope>FUNCTION IN MEIOSIS</scope>
</reference>
<reference key="3">
    <citation type="journal article" date="2006" name="Nat. Biotechnol.">
        <title>ORFeome cloning and global analysis of protein localization in the fission yeast Schizosaccharomyces pombe.</title>
        <authorList>
            <person name="Matsuyama A."/>
            <person name="Arai R."/>
            <person name="Yashiroda Y."/>
            <person name="Shirai A."/>
            <person name="Kamata A."/>
            <person name="Sekido S."/>
            <person name="Kobayashi Y."/>
            <person name="Hashimoto A."/>
            <person name="Hamamoto M."/>
            <person name="Hiraoka Y."/>
            <person name="Horinouchi S."/>
            <person name="Yoshida M."/>
        </authorList>
    </citation>
    <scope>SUBCELLULAR LOCATION [LARGE SCALE ANALYSIS]</scope>
</reference>
<gene>
    <name type="primary">mug96</name>
    <name type="ORF">SPBC1271.06c</name>
</gene>
<protein>
    <recommendedName>
        <fullName>Meiotically up-regulated gene 96 protein</fullName>
    </recommendedName>
</protein>
<comment type="function">
    <text evidence="2">Has a role in meiosis.</text>
</comment>
<comment type="subcellular location">
    <subcellularLocation>
        <location evidence="3">Cytoplasm</location>
    </subcellularLocation>
    <subcellularLocation>
        <location evidence="4">Membrane</location>
        <topology evidence="4">Single-pass membrane protein</topology>
    </subcellularLocation>
</comment>
<dbReference type="EMBL" id="CU329671">
    <property type="protein sequence ID" value="CAA22196.1"/>
    <property type="molecule type" value="Genomic_DNA"/>
</dbReference>
<dbReference type="PIR" id="T39342">
    <property type="entry name" value="T39342"/>
</dbReference>
<dbReference type="RefSeq" id="NP_595144.1">
    <property type="nucleotide sequence ID" value="NM_001021052.2"/>
</dbReference>
<dbReference type="BioGRID" id="277917">
    <property type="interactions" value="6"/>
</dbReference>
<dbReference type="STRING" id="284812.O94339"/>
<dbReference type="PaxDb" id="4896-SPBC1271.06c.1"/>
<dbReference type="EnsemblFungi" id="SPBC1271.06c.1">
    <property type="protein sequence ID" value="SPBC1271.06c.1:pep"/>
    <property type="gene ID" value="SPBC1271.06c"/>
</dbReference>
<dbReference type="GeneID" id="2541409"/>
<dbReference type="KEGG" id="spo:2541409"/>
<dbReference type="PomBase" id="SPBC1271.06c">
    <property type="gene designation" value="mug96"/>
</dbReference>
<dbReference type="VEuPathDB" id="FungiDB:SPBC1271.06c"/>
<dbReference type="HOGENOM" id="CLU_1778551_0_0_1"/>
<dbReference type="InParanoid" id="O94339"/>
<dbReference type="PRO" id="PR:O94339"/>
<dbReference type="Proteomes" id="UP000002485">
    <property type="component" value="Chromosome II"/>
</dbReference>
<dbReference type="GO" id="GO:0005737">
    <property type="term" value="C:cytoplasm"/>
    <property type="evidence" value="ECO:0007005"/>
    <property type="project" value="PomBase"/>
</dbReference>
<dbReference type="GO" id="GO:0016020">
    <property type="term" value="C:membrane"/>
    <property type="evidence" value="ECO:0007669"/>
    <property type="project" value="UniProtKB-SubCell"/>
</dbReference>
<dbReference type="GO" id="GO:0051321">
    <property type="term" value="P:meiotic cell cycle"/>
    <property type="evidence" value="ECO:0007669"/>
    <property type="project" value="UniProtKB-KW"/>
</dbReference>
<evidence type="ECO:0000255" key="1"/>
<evidence type="ECO:0000269" key="2">
    <source>
    </source>
</evidence>
<evidence type="ECO:0000269" key="3">
    <source>
    </source>
</evidence>
<evidence type="ECO:0000305" key="4"/>
<accession>O94339</accession>
<organism>
    <name type="scientific">Schizosaccharomyces pombe (strain 972 / ATCC 24843)</name>
    <name type="common">Fission yeast</name>
    <dbReference type="NCBI Taxonomy" id="284812"/>
    <lineage>
        <taxon>Eukaryota</taxon>
        <taxon>Fungi</taxon>
        <taxon>Dikarya</taxon>
        <taxon>Ascomycota</taxon>
        <taxon>Taphrinomycotina</taxon>
        <taxon>Schizosaccharomycetes</taxon>
        <taxon>Schizosaccharomycetales</taxon>
        <taxon>Schizosaccharomycetaceae</taxon>
        <taxon>Schizosaccharomyces</taxon>
    </lineage>
</organism>
<name>MUG96_SCHPO</name>
<feature type="chain" id="PRO_0000278617" description="Meiotically up-regulated gene 96 protein">
    <location>
        <begin position="1"/>
        <end position="146"/>
    </location>
</feature>
<feature type="transmembrane region" description="Helical" evidence="1">
    <location>
        <begin position="85"/>
        <end position="104"/>
    </location>
</feature>
<sequence>MVIFSSYFSKQMNRFSTPFVFFFKKLNNTLKKSLQFIMRFHSYHPMFICLLRDSSRNENRKKKVSIGLRTIMRAFSFLMQVATCLIRYSLILTCLVAILLSVLWRIQFAALRMHDLIEEELKMFVLQHNCTLADLWSGKCPSSEDE</sequence>
<keyword id="KW-0963">Cytoplasm</keyword>
<keyword id="KW-0469">Meiosis</keyword>
<keyword id="KW-0472">Membrane</keyword>
<keyword id="KW-1185">Reference proteome</keyword>
<keyword id="KW-0812">Transmembrane</keyword>
<keyword id="KW-1133">Transmembrane helix</keyword>
<proteinExistence type="evidence at protein level"/>